<comment type="function">
    <text evidence="1">Catalyzes the formation of 4-diphosphocytidyl-2-C-methyl-D-erythritol from CTP and 2-C-methyl-D-erythritol 4-phosphate (MEP).</text>
</comment>
<comment type="catalytic activity">
    <reaction evidence="1">
        <text>2-C-methyl-D-erythritol 4-phosphate + CTP + H(+) = 4-CDP-2-C-methyl-D-erythritol + diphosphate</text>
        <dbReference type="Rhea" id="RHEA:13429"/>
        <dbReference type="ChEBI" id="CHEBI:15378"/>
        <dbReference type="ChEBI" id="CHEBI:33019"/>
        <dbReference type="ChEBI" id="CHEBI:37563"/>
        <dbReference type="ChEBI" id="CHEBI:57823"/>
        <dbReference type="ChEBI" id="CHEBI:58262"/>
        <dbReference type="EC" id="2.7.7.60"/>
    </reaction>
</comment>
<comment type="pathway">
    <text evidence="1">Isoprenoid biosynthesis; isopentenyl diphosphate biosynthesis via DXP pathway; isopentenyl diphosphate from 1-deoxy-D-xylulose 5-phosphate: step 2/6.</text>
</comment>
<comment type="similarity">
    <text evidence="1">Belongs to the IspD/TarI cytidylyltransferase family. IspD subfamily.</text>
</comment>
<organism>
    <name type="scientific">Nocardia farcinica (strain IFM 10152)</name>
    <dbReference type="NCBI Taxonomy" id="247156"/>
    <lineage>
        <taxon>Bacteria</taxon>
        <taxon>Bacillati</taxon>
        <taxon>Actinomycetota</taxon>
        <taxon>Actinomycetes</taxon>
        <taxon>Mycobacteriales</taxon>
        <taxon>Nocardiaceae</taxon>
        <taxon>Nocardia</taxon>
    </lineage>
</organism>
<keyword id="KW-0414">Isoprene biosynthesis</keyword>
<keyword id="KW-0548">Nucleotidyltransferase</keyword>
<keyword id="KW-1185">Reference proteome</keyword>
<keyword id="KW-0808">Transferase</keyword>
<dbReference type="EC" id="2.7.7.60" evidence="1"/>
<dbReference type="EMBL" id="AP006618">
    <property type="protein sequence ID" value="BAD55278.1"/>
    <property type="molecule type" value="Genomic_DNA"/>
</dbReference>
<dbReference type="RefSeq" id="WP_011206965.1">
    <property type="nucleotide sequence ID" value="NC_006361.1"/>
</dbReference>
<dbReference type="SMR" id="Q5Z2R3"/>
<dbReference type="STRING" id="247156.NFA_4360"/>
<dbReference type="GeneID" id="61131272"/>
<dbReference type="KEGG" id="nfa:NFA_4360"/>
<dbReference type="eggNOG" id="COG1211">
    <property type="taxonomic scope" value="Bacteria"/>
</dbReference>
<dbReference type="HOGENOM" id="CLU_061281_1_1_11"/>
<dbReference type="OrthoDB" id="9802561at2"/>
<dbReference type="UniPathway" id="UPA00056">
    <property type="reaction ID" value="UER00093"/>
</dbReference>
<dbReference type="Proteomes" id="UP000006820">
    <property type="component" value="Chromosome"/>
</dbReference>
<dbReference type="GO" id="GO:0050518">
    <property type="term" value="F:2-C-methyl-D-erythritol 4-phosphate cytidylyltransferase activity"/>
    <property type="evidence" value="ECO:0007669"/>
    <property type="project" value="UniProtKB-UniRule"/>
</dbReference>
<dbReference type="GO" id="GO:0019288">
    <property type="term" value="P:isopentenyl diphosphate biosynthetic process, methylerythritol 4-phosphate pathway"/>
    <property type="evidence" value="ECO:0007669"/>
    <property type="project" value="UniProtKB-UniRule"/>
</dbReference>
<dbReference type="CDD" id="cd02516">
    <property type="entry name" value="CDP-ME_synthetase"/>
    <property type="match status" value="1"/>
</dbReference>
<dbReference type="FunFam" id="3.90.550.10:FF:000003">
    <property type="entry name" value="2-C-methyl-D-erythritol 4-phosphate cytidylyltransferase"/>
    <property type="match status" value="1"/>
</dbReference>
<dbReference type="Gene3D" id="3.90.550.10">
    <property type="entry name" value="Spore Coat Polysaccharide Biosynthesis Protein SpsA, Chain A"/>
    <property type="match status" value="1"/>
</dbReference>
<dbReference type="HAMAP" id="MF_00108">
    <property type="entry name" value="IspD"/>
    <property type="match status" value="1"/>
</dbReference>
<dbReference type="InterPro" id="IPR001228">
    <property type="entry name" value="IspD"/>
</dbReference>
<dbReference type="InterPro" id="IPR034683">
    <property type="entry name" value="IspD/TarI"/>
</dbReference>
<dbReference type="InterPro" id="IPR050088">
    <property type="entry name" value="IspD/TarI_cytidylyltransf_bact"/>
</dbReference>
<dbReference type="InterPro" id="IPR029044">
    <property type="entry name" value="Nucleotide-diphossugar_trans"/>
</dbReference>
<dbReference type="NCBIfam" id="TIGR00453">
    <property type="entry name" value="ispD"/>
    <property type="match status" value="1"/>
</dbReference>
<dbReference type="PANTHER" id="PTHR32125">
    <property type="entry name" value="2-C-METHYL-D-ERYTHRITOL 4-PHOSPHATE CYTIDYLYLTRANSFERASE, CHLOROPLASTIC"/>
    <property type="match status" value="1"/>
</dbReference>
<dbReference type="PANTHER" id="PTHR32125:SF4">
    <property type="entry name" value="2-C-METHYL-D-ERYTHRITOL 4-PHOSPHATE CYTIDYLYLTRANSFERASE, CHLOROPLASTIC"/>
    <property type="match status" value="1"/>
</dbReference>
<dbReference type="Pfam" id="PF01128">
    <property type="entry name" value="IspD"/>
    <property type="match status" value="1"/>
</dbReference>
<dbReference type="SUPFAM" id="SSF53448">
    <property type="entry name" value="Nucleotide-diphospho-sugar transferases"/>
    <property type="match status" value="1"/>
</dbReference>
<evidence type="ECO:0000255" key="1">
    <source>
        <dbReference type="HAMAP-Rule" id="MF_00108"/>
    </source>
</evidence>
<proteinExistence type="inferred from homology"/>
<reference key="1">
    <citation type="journal article" date="2004" name="Proc. Natl. Acad. Sci. U.S.A.">
        <title>The complete genomic sequence of Nocardia farcinica IFM 10152.</title>
        <authorList>
            <person name="Ishikawa J."/>
            <person name="Yamashita A."/>
            <person name="Mikami Y."/>
            <person name="Hoshino Y."/>
            <person name="Kurita H."/>
            <person name="Hotta K."/>
            <person name="Shiba T."/>
            <person name="Hattori M."/>
        </authorList>
    </citation>
    <scope>NUCLEOTIDE SEQUENCE [LARGE SCALE GENOMIC DNA]</scope>
    <source>
        <strain>IFM 10152</strain>
    </source>
</reference>
<accession>Q5Z2R3</accession>
<name>ISPD_NOCFA</name>
<protein>
    <recommendedName>
        <fullName evidence="1">2-C-methyl-D-erythritol 4-phosphate cytidylyltransferase</fullName>
        <ecNumber evidence="1">2.7.7.60</ecNumber>
    </recommendedName>
    <alternativeName>
        <fullName evidence="1">4-diphosphocytidyl-2C-methyl-D-erythritol synthase</fullName>
    </alternativeName>
    <alternativeName>
        <fullName evidence="1">MEP cytidylyltransferase</fullName>
        <shortName evidence="1">MCT</shortName>
    </alternativeName>
</protein>
<sequence length="230" mass="23547">MNDADNDGSVVALVPAAGRGVRLGEKSPKAFVPVGGTPMVRLAVDGLLAAGVVDRIIVMVPAEWVESAVALLPPSEVVRVVVGGAERTDSVRAGLAAAPDAGYFLVHDAARALTPPALIGRIVGELRAGRRAVVPALPVVDTVKSVDAAGVVTGTPDRAALRAVQTPQGFTADLLRAAYAADVPATDDAGLVERLGEPVHTVAGDPLAFKITTPLDLRLAETLLDRRAAL</sequence>
<gene>
    <name evidence="1" type="primary">ispD</name>
    <name type="synonym">mecT</name>
    <name type="ordered locus">NFA_4360</name>
</gene>
<feature type="chain" id="PRO_0000237802" description="2-C-methyl-D-erythritol 4-phosphate cytidylyltransferase">
    <location>
        <begin position="1"/>
        <end position="230"/>
    </location>
</feature>
<feature type="site" description="Transition state stabilizer" evidence="1">
    <location>
        <position position="22"/>
    </location>
</feature>
<feature type="site" description="Transition state stabilizer" evidence="1">
    <location>
        <position position="29"/>
    </location>
</feature>
<feature type="site" description="Positions MEP for the nucleophilic attack" evidence="1">
    <location>
        <position position="158"/>
    </location>
</feature>
<feature type="site" description="Positions MEP for the nucleophilic attack" evidence="1">
    <location>
        <position position="210"/>
    </location>
</feature>